<keyword id="KW-0002">3D-structure</keyword>
<keyword id="KW-0963">Cytoplasm</keyword>
<keyword id="KW-0903">Direct protein sequencing</keyword>
<keyword id="KW-0349">Heme</keyword>
<keyword id="KW-0408">Iron</keyword>
<keyword id="KW-0479">Metal-binding</keyword>
<keyword id="KW-0944">Nitration</keyword>
<keyword id="KW-0535">Nitrogen fixation</keyword>
<keyword id="KW-0536">Nodulation</keyword>
<keyword id="KW-0539">Nucleus</keyword>
<keyword id="KW-0561">Oxygen transport</keyword>
<keyword id="KW-0597">Phosphoprotein</keyword>
<keyword id="KW-0813">Transport</keyword>
<name>LGB2_LUPLU</name>
<dbReference type="EMBL" id="M17893">
    <property type="protein sequence ID" value="AAA33410.1"/>
    <property type="molecule type" value="mRNA"/>
</dbReference>
<dbReference type="PIR" id="S41328">
    <property type="entry name" value="GPYL2"/>
</dbReference>
<dbReference type="PDB" id="1GDI">
    <property type="method" value="X-ray"/>
    <property type="resolution" value="1.80 A"/>
    <property type="chains" value="A=2-154"/>
</dbReference>
<dbReference type="PDB" id="1GDJ">
    <property type="method" value="X-ray"/>
    <property type="resolution" value="1.70 A"/>
    <property type="chains" value="A=2-154"/>
</dbReference>
<dbReference type="PDB" id="1GDK">
    <property type="method" value="X-ray"/>
    <property type="resolution" value="1.80 A"/>
    <property type="chains" value="A=2-154"/>
</dbReference>
<dbReference type="PDB" id="1GDL">
    <property type="method" value="X-ray"/>
    <property type="resolution" value="1.80 A"/>
    <property type="chains" value="A=2-154"/>
</dbReference>
<dbReference type="PDB" id="1LH1">
    <property type="method" value="X-ray"/>
    <property type="resolution" value="2.00 A"/>
    <property type="chains" value="A=2-154"/>
</dbReference>
<dbReference type="PDB" id="1LH2">
    <property type="method" value="X-ray"/>
    <property type="resolution" value="2.00 A"/>
    <property type="chains" value="A=2-154"/>
</dbReference>
<dbReference type="PDB" id="1LH3">
    <property type="method" value="X-ray"/>
    <property type="resolution" value="2.00 A"/>
    <property type="chains" value="A=2-154"/>
</dbReference>
<dbReference type="PDB" id="1LH5">
    <property type="method" value="X-ray"/>
    <property type="resolution" value="2.00 A"/>
    <property type="chains" value="A=2-154"/>
</dbReference>
<dbReference type="PDB" id="1LH6">
    <property type="method" value="X-ray"/>
    <property type="resolution" value="2.00 A"/>
    <property type="chains" value="A=2-154"/>
</dbReference>
<dbReference type="PDB" id="1LH7">
    <property type="method" value="X-ray"/>
    <property type="resolution" value="2.00 A"/>
    <property type="chains" value="A=2-154"/>
</dbReference>
<dbReference type="PDB" id="2GDM">
    <property type="method" value="X-ray"/>
    <property type="resolution" value="1.70 A"/>
    <property type="chains" value="A=2-154"/>
</dbReference>
<dbReference type="PDB" id="2LH1">
    <property type="method" value="X-ray"/>
    <property type="resolution" value="2.00 A"/>
    <property type="chains" value="A=2-154"/>
</dbReference>
<dbReference type="PDB" id="2LH2">
    <property type="method" value="X-ray"/>
    <property type="resolution" value="2.00 A"/>
    <property type="chains" value="A=2-154"/>
</dbReference>
<dbReference type="PDB" id="2LH3">
    <property type="method" value="X-ray"/>
    <property type="resolution" value="2.00 A"/>
    <property type="chains" value="A=2-154"/>
</dbReference>
<dbReference type="PDB" id="2LH5">
    <property type="method" value="X-ray"/>
    <property type="resolution" value="2.00 A"/>
    <property type="chains" value="A=2-154"/>
</dbReference>
<dbReference type="PDB" id="2LH6">
    <property type="method" value="X-ray"/>
    <property type="resolution" value="2.00 A"/>
    <property type="chains" value="A=2-154"/>
</dbReference>
<dbReference type="PDB" id="2LH7">
    <property type="method" value="X-ray"/>
    <property type="resolution" value="2.00 A"/>
    <property type="chains" value="A=2-154"/>
</dbReference>
<dbReference type="PDBsum" id="1GDI"/>
<dbReference type="PDBsum" id="1GDJ"/>
<dbReference type="PDBsum" id="1GDK"/>
<dbReference type="PDBsum" id="1GDL"/>
<dbReference type="PDBsum" id="1LH1"/>
<dbReference type="PDBsum" id="1LH2"/>
<dbReference type="PDBsum" id="1LH3"/>
<dbReference type="PDBsum" id="1LH5"/>
<dbReference type="PDBsum" id="1LH6"/>
<dbReference type="PDBsum" id="1LH7"/>
<dbReference type="PDBsum" id="2GDM"/>
<dbReference type="PDBsum" id="2LH1"/>
<dbReference type="PDBsum" id="2LH2"/>
<dbReference type="PDBsum" id="2LH3"/>
<dbReference type="PDBsum" id="2LH5"/>
<dbReference type="PDBsum" id="2LH6"/>
<dbReference type="PDBsum" id="2LH7"/>
<dbReference type="SMR" id="P02240"/>
<dbReference type="EvolutionaryTrace" id="P02240"/>
<dbReference type="GO" id="GO:0005829">
    <property type="term" value="C:cytosol"/>
    <property type="evidence" value="ECO:0000314"/>
    <property type="project" value="UniProtKB"/>
</dbReference>
<dbReference type="GO" id="GO:0005634">
    <property type="term" value="C:nucleus"/>
    <property type="evidence" value="ECO:0000314"/>
    <property type="project" value="UniProtKB"/>
</dbReference>
<dbReference type="GO" id="GO:0020037">
    <property type="term" value="F:heme binding"/>
    <property type="evidence" value="ECO:0007669"/>
    <property type="project" value="InterPro"/>
</dbReference>
<dbReference type="GO" id="GO:0046872">
    <property type="term" value="F:metal ion binding"/>
    <property type="evidence" value="ECO:0007669"/>
    <property type="project" value="UniProtKB-KW"/>
</dbReference>
<dbReference type="GO" id="GO:0019825">
    <property type="term" value="F:oxygen binding"/>
    <property type="evidence" value="ECO:0007669"/>
    <property type="project" value="InterPro"/>
</dbReference>
<dbReference type="GO" id="GO:0005344">
    <property type="term" value="F:oxygen carrier activity"/>
    <property type="evidence" value="ECO:0007669"/>
    <property type="project" value="UniProtKB-KW"/>
</dbReference>
<dbReference type="GO" id="GO:0009877">
    <property type="term" value="P:nodulation"/>
    <property type="evidence" value="ECO:0007669"/>
    <property type="project" value="UniProtKB-KW"/>
</dbReference>
<dbReference type="GO" id="GO:0010167">
    <property type="term" value="P:response to nitrate"/>
    <property type="evidence" value="ECO:0000270"/>
    <property type="project" value="UniProtKB"/>
</dbReference>
<dbReference type="CDD" id="cd08923">
    <property type="entry name" value="class1-2_nsHbs_Lbs"/>
    <property type="match status" value="1"/>
</dbReference>
<dbReference type="Gene3D" id="1.10.490.10">
    <property type="entry name" value="Globins"/>
    <property type="match status" value="1"/>
</dbReference>
<dbReference type="InterPro" id="IPR000971">
    <property type="entry name" value="Globin"/>
</dbReference>
<dbReference type="InterPro" id="IPR009050">
    <property type="entry name" value="Globin-like_sf"/>
</dbReference>
<dbReference type="InterPro" id="IPR012292">
    <property type="entry name" value="Globin/Proto"/>
</dbReference>
<dbReference type="InterPro" id="IPR001032">
    <property type="entry name" value="Leghaemoglobin-like"/>
</dbReference>
<dbReference type="InterPro" id="IPR019824">
    <property type="entry name" value="Leghaemoglobin_Fe_BS"/>
</dbReference>
<dbReference type="PANTHER" id="PTHR22924">
    <property type="entry name" value="LEGHEMOGLOBIN-RELATED"/>
    <property type="match status" value="1"/>
</dbReference>
<dbReference type="PANTHER" id="PTHR22924:SF92">
    <property type="entry name" value="NON-SYMBIOTIC HEMOGLOBIN 2"/>
    <property type="match status" value="1"/>
</dbReference>
<dbReference type="Pfam" id="PF00042">
    <property type="entry name" value="Globin"/>
    <property type="match status" value="1"/>
</dbReference>
<dbReference type="PRINTS" id="PR00188">
    <property type="entry name" value="PLANTGLOBIN"/>
</dbReference>
<dbReference type="SUPFAM" id="SSF46458">
    <property type="entry name" value="Globin-like"/>
    <property type="match status" value="1"/>
</dbReference>
<dbReference type="PROSITE" id="PS01033">
    <property type="entry name" value="GLOBIN"/>
    <property type="match status" value="1"/>
</dbReference>
<dbReference type="PROSITE" id="PS00208">
    <property type="entry name" value="PLANT_GLOBIN"/>
    <property type="match status" value="1"/>
</dbReference>
<comment type="function">
    <text evidence="2 8 9 11">Leghemoglobin that reversibly binds oxygen O(2) through a pentacoordinated heme iron (PubMed:7643380, PubMed:8950274, Ref.5). In root nodules, facilitates the diffusion of oxygen to the bacteroids while preventing the bacterial nitrogenase from being inactivated by buffering dioxygen, nitric oxide and carbon monoxide, and promoting the formation of reactive oxygen species (ROS, e.g. H(2)O(2)) (By similarity). This role is essential for symbiotic nitrogen fixation (SNF) (By similarity).</text>
</comment>
<comment type="subunit">
    <text evidence="5 8 9">Monomer.</text>
</comment>
<comment type="subcellular location">
    <subcellularLocation>
        <location evidence="6">Cytoplasm</location>
        <location evidence="6">Cytosol</location>
    </subcellularLocation>
    <subcellularLocation>
        <location evidence="6">Nucleus</location>
    </subcellularLocation>
</comment>
<comment type="tissue specificity">
    <text evidence="6 7">Root nodules.</text>
</comment>
<comment type="induction">
    <text evidence="6">Repressed by nitrate in a dose-dependent manner.</text>
</comment>
<comment type="PTM">
    <text evidence="1">Nitrated in effective nodules and particularly in hypoxic conditions; this mechanism may play a protective role in the symbiosis by buffering toxic peroxynitrite NO(2)(-). Nitration level decrease during nodule senescence.</text>
</comment>
<comment type="PTM">
    <text evidence="3">Phosphorylation at Ser-46 disrupts the molecular environment of its porphyrin ring oxygen binding pocket, thus leading to a reduced oxygen consumption and to the delivery of oxygen O(2) to symbiosomes.</text>
</comment>
<comment type="similarity">
    <text evidence="4">Belongs to the plant globin family.</text>
</comment>
<feature type="initiator methionine" description="Removed" evidence="10">
    <location>
        <position position="1"/>
    </location>
</feature>
<feature type="chain" id="PRO_0000192985" description="Leghemoglobin-2">
    <location>
        <begin position="2"/>
        <end position="154"/>
    </location>
</feature>
<feature type="domain" description="Globin" evidence="4">
    <location>
        <begin position="3"/>
        <end position="151"/>
    </location>
</feature>
<feature type="binding site" evidence="8 9 11 14 15 16 17 18 19 20 21 22 23 24 25 26 27 28 29 30">
    <location>
        <position position="46"/>
    </location>
    <ligand>
        <name>heme b</name>
        <dbReference type="ChEBI" id="CHEBI:60344"/>
    </ligand>
</feature>
<feature type="binding site" evidence="8 11 24 26">
    <location>
        <position position="64"/>
    </location>
    <ligand>
        <name>O2</name>
        <dbReference type="ChEBI" id="CHEBI:15379"/>
    </ligand>
</feature>
<feature type="binding site" evidence="8 9 11 14 18 19 20 21 22 23 24 25 26 27 28 29 30">
    <location>
        <position position="67"/>
    </location>
    <ligand>
        <name>heme b</name>
        <dbReference type="ChEBI" id="CHEBI:60344"/>
    </ligand>
</feature>
<feature type="binding site" description="proximal binding residue" evidence="4 8 9 11 14 15 16 17 18 19 20 21 22 23 24 25 26 27 28 29 30">
    <location>
        <position position="98"/>
    </location>
    <ligand>
        <name>heme b</name>
        <dbReference type="ChEBI" id="CHEBI:60344"/>
    </ligand>
    <ligandPart>
        <name>Fe</name>
        <dbReference type="ChEBI" id="CHEBI:18248"/>
    </ligandPart>
</feature>
<feature type="binding site" evidence="11 20 22 23 27 29 30">
    <location>
        <position position="101"/>
    </location>
    <ligand>
        <name>heme b</name>
        <dbReference type="ChEBI" id="CHEBI:60344"/>
    </ligand>
</feature>
<feature type="modified residue" description="Phosphoserine" evidence="3">
    <location>
        <position position="46"/>
    </location>
</feature>
<feature type="modified residue" description="Nitrated tyrosine" evidence="1">
    <location>
        <position position="139"/>
    </location>
</feature>
<feature type="sequence conflict" description="In Ref. 2; AAA33410." evidence="13" ref="2">
    <original>Q</original>
    <variation>AS</variation>
    <location>
        <position position="62"/>
    </location>
</feature>
<feature type="sequence conflict" description="In Ref. 1; AA sequence." evidence="13" ref="1">
    <original>Q</original>
    <variation>E</variation>
    <location>
        <position position="80"/>
    </location>
</feature>
<feature type="sequence conflict" description="In Ref. 1; AA sequence." evidence="13" ref="1">
    <original>T</original>
    <variation>S</variation>
    <location>
        <position position="87"/>
    </location>
</feature>
<feature type="sequence conflict" description="In Ref. 1; AA sequence." evidence="13" ref="1">
    <original>N</original>
    <variation>D</variation>
    <location>
        <position position="151"/>
    </location>
</feature>
<feature type="helix" evidence="31">
    <location>
        <begin position="6"/>
        <end position="20"/>
    </location>
</feature>
<feature type="helix" evidence="31">
    <location>
        <begin position="23"/>
        <end position="37"/>
    </location>
</feature>
<feature type="helix" evidence="31">
    <location>
        <begin position="39"/>
        <end position="44"/>
    </location>
</feature>
<feature type="turn" evidence="31">
    <location>
        <begin position="46"/>
        <end position="50"/>
    </location>
</feature>
<feature type="helix" evidence="31">
    <location>
        <begin position="59"/>
        <end position="82"/>
    </location>
</feature>
<feature type="helix" evidence="31">
    <location>
        <begin position="89"/>
        <end position="101"/>
    </location>
</feature>
<feature type="helix" evidence="31">
    <location>
        <begin position="105"/>
        <end position="107"/>
    </location>
</feature>
<feature type="helix" evidence="31">
    <location>
        <begin position="108"/>
        <end position="123"/>
    </location>
</feature>
<feature type="helix" evidence="31">
    <location>
        <begin position="124"/>
        <end position="126"/>
    </location>
</feature>
<feature type="helix" evidence="31">
    <location>
        <begin position="129"/>
        <end position="153"/>
    </location>
</feature>
<proteinExistence type="evidence at protein level"/>
<organism>
    <name type="scientific">Lupinus luteus</name>
    <name type="common">European yellow lupine</name>
    <dbReference type="NCBI Taxonomy" id="3873"/>
    <lineage>
        <taxon>Eukaryota</taxon>
        <taxon>Viridiplantae</taxon>
        <taxon>Streptophyta</taxon>
        <taxon>Embryophyta</taxon>
        <taxon>Tracheophyta</taxon>
        <taxon>Spermatophyta</taxon>
        <taxon>Magnoliopsida</taxon>
        <taxon>eudicotyledons</taxon>
        <taxon>Gunneridae</taxon>
        <taxon>Pentapetalae</taxon>
        <taxon>rosids</taxon>
        <taxon>fabids</taxon>
        <taxon>Fabales</taxon>
        <taxon>Fabaceae</taxon>
        <taxon>Papilionoideae</taxon>
        <taxon>50 kb inversion clade</taxon>
        <taxon>genistoids sensu lato</taxon>
        <taxon>core genistoids</taxon>
        <taxon>Genisteae</taxon>
        <taxon>Lupinus</taxon>
    </lineage>
</organism>
<gene>
    <name evidence="12" type="primary">Lb2</name>
</gene>
<sequence>MGALTESQAALVKSSWEEFNANIPKHTHRFFILVLEIAPAAKDLFSFLKGTSEVPQNNPELQAHAGKVFKLVYEAAIQLQVTGVVVTDATLKNLGSVHVSKGVADAHFPVVKEAILKTIKEVVGAKWSEELNSAWTIAYDELAIVIKKEMNDAA</sequence>
<protein>
    <recommendedName>
        <fullName evidence="12">Leghemoglobin-2</fullName>
        <shortName evidence="12">LlLb2</shortName>
    </recommendedName>
    <alternativeName>
        <fullName evidence="12">Leghemoglobin II</fullName>
    </alternativeName>
</protein>
<evidence type="ECO:0000250" key="1">
    <source>
        <dbReference type="UniProtKB" id="P02234"/>
    </source>
</evidence>
<evidence type="ECO:0000250" key="2">
    <source>
        <dbReference type="UniProtKB" id="P02237"/>
    </source>
</evidence>
<evidence type="ECO:0000250" key="3">
    <source>
        <dbReference type="UniProtKB" id="Q3C1F7"/>
    </source>
</evidence>
<evidence type="ECO:0000255" key="4">
    <source>
        <dbReference type="PROSITE-ProRule" id="PRU00238"/>
    </source>
</evidence>
<evidence type="ECO:0000269" key="5">
    <source>
    </source>
</evidence>
<evidence type="ECO:0000269" key="6">
    <source>
    </source>
</evidence>
<evidence type="ECO:0000269" key="7">
    <source>
    </source>
</evidence>
<evidence type="ECO:0000269" key="8">
    <source>
    </source>
</evidence>
<evidence type="ECO:0000269" key="9">
    <source>
    </source>
</evidence>
<evidence type="ECO:0000269" key="10">
    <source ref="1"/>
</evidence>
<evidence type="ECO:0000269" key="11">
    <source ref="5"/>
</evidence>
<evidence type="ECO:0000303" key="12">
    <source>
    </source>
</evidence>
<evidence type="ECO:0000305" key="13"/>
<evidence type="ECO:0007744" key="14">
    <source>
        <dbReference type="PDB" id="1GDI"/>
    </source>
</evidence>
<evidence type="ECO:0007744" key="15">
    <source>
        <dbReference type="PDB" id="1GDJ"/>
    </source>
</evidence>
<evidence type="ECO:0007744" key="16">
    <source>
        <dbReference type="PDB" id="1GDK"/>
    </source>
</evidence>
<evidence type="ECO:0007744" key="17">
    <source>
        <dbReference type="PDB" id="1GDL"/>
    </source>
</evidence>
<evidence type="ECO:0007744" key="18">
    <source>
        <dbReference type="PDB" id="1LH1"/>
    </source>
</evidence>
<evidence type="ECO:0007744" key="19">
    <source>
        <dbReference type="PDB" id="1LH2"/>
    </source>
</evidence>
<evidence type="ECO:0007744" key="20">
    <source>
        <dbReference type="PDB" id="1LH3"/>
    </source>
</evidence>
<evidence type="ECO:0007744" key="21">
    <source>
        <dbReference type="PDB" id="1LH5"/>
    </source>
</evidence>
<evidence type="ECO:0007744" key="22">
    <source>
        <dbReference type="PDB" id="1LH6"/>
    </source>
</evidence>
<evidence type="ECO:0007744" key="23">
    <source>
        <dbReference type="PDB" id="1LH7"/>
    </source>
</evidence>
<evidence type="ECO:0007744" key="24">
    <source>
        <dbReference type="PDB" id="2GDM"/>
    </source>
</evidence>
<evidence type="ECO:0007744" key="25">
    <source>
        <dbReference type="PDB" id="2LH1"/>
    </source>
</evidence>
<evidence type="ECO:0007744" key="26">
    <source>
        <dbReference type="PDB" id="2LH2"/>
    </source>
</evidence>
<evidence type="ECO:0007744" key="27">
    <source>
        <dbReference type="PDB" id="2LH3"/>
    </source>
</evidence>
<evidence type="ECO:0007744" key="28">
    <source>
        <dbReference type="PDB" id="2LH5"/>
    </source>
</evidence>
<evidence type="ECO:0007744" key="29">
    <source>
        <dbReference type="PDB" id="2LH6"/>
    </source>
</evidence>
<evidence type="ECO:0007744" key="30">
    <source>
        <dbReference type="PDB" id="2LH7"/>
    </source>
</evidence>
<evidence type="ECO:0007829" key="31">
    <source>
        <dbReference type="PDB" id="1GDJ"/>
    </source>
</evidence>
<accession>P02240</accession>
<reference key="1">
    <citation type="journal article" date="1978" name="Bioorg. Khim.">
        <title>Primary structure of leghemoglobin II from the nodules of the yellow lupin (Lupinus luteus L.).</title>
        <authorList>
            <person name="Egorov T.A."/>
            <person name="Kazakov V.K."/>
            <person name="Shakhparonov M.I."/>
            <person name="Feigina M.Y."/>
            <person name="Kostetsky P.V."/>
        </authorList>
    </citation>
    <scope>PROTEIN SEQUENCE OF 2-154</scope>
    <source>
        <tissue>Root nodule</tissue>
    </source>
</reference>
<reference key="2">
    <citation type="journal article" date="1987" name="Mol. Biol. Rep.">
        <title>Molecular cloning of lupin leghemoglobin cDNA.</title>
        <authorList>
            <person name="Konieczny A."/>
            <person name="Jensen E.O."/>
            <person name="Marcker K.A."/>
            <person name="Legocki A.B."/>
        </authorList>
    </citation>
    <scope>NUCLEOTIDE SEQUENCE [MRNA] OF 62-154</scope>
    <scope>TISSUE SPECIFICITY</scope>
    <source>
        <tissue>Root nodule</tissue>
    </source>
</reference>
<reference key="3">
    <citation type="journal article" date="1989" name="Plant Physiol.">
        <title>Leghemoglobin in Lupin Plants (Lupinus albus cv Multolupa).</title>
        <authorList>
            <person name="Vivo A."/>
            <person name="Andreu J.M."/>
            <person name="de la Vina S."/>
            <person name="de Felipe M.R."/>
        </authorList>
    </citation>
    <scope>TISSUE SPECIFICITY</scope>
    <scope>SUBCELLULAR LOCATION</scope>
    <scope>INDUCTION BY NITRATE</scope>
    <source>
        <strain>cv. Multolupa</strain>
    </source>
</reference>
<reference key="4">
    <citation type="journal article" date="1975" name="Nature">
        <title>Structure of leghaemoglobin from lupin root nodules at 5-A resolution.</title>
        <authorList>
            <person name="Vainshtein B.K."/>
            <person name="Harutyunyan E.H."/>
            <person name="Kuranova I.P."/>
            <person name="Borisov V.V."/>
            <person name="Sosfenov N.I."/>
            <person name="Pavlovsky A.G."/>
            <person name="Grebenko A.I."/>
            <person name="Konareva N.V."/>
        </authorList>
    </citation>
    <scope>X-RAY CRYSTALLOGRAPHY (5.0 ANGSTROMS)</scope>
    <scope>SUBUNIT</scope>
    <source>
        <tissue>Root nodule</tissue>
    </source>
</reference>
<reference key="5">
    <citation type="journal article" date="1980" name="Sov. Phys. Crystallogr.">
        <title>X-ray structural investigation of leghemoglobin. VI. Structure of acetate-ferrileghemoglobin at a resolution of 2.0 A.</title>
        <authorList>
            <person name="Arutiunian E.G."/>
            <person name="Kuranova I.P."/>
            <person name="Vainshtein B.K."/>
            <person name="Steigemann W."/>
        </authorList>
    </citation>
    <scope>X-RAY CRYSTALLOGRAPHY (2.00 ANGSTROMS) OF 2-154 IN COMPLEX WITH HEME B AND DIOXYGEN</scope>
    <scope>FUNCTION</scope>
</reference>
<reference key="6">
    <citation type="journal article" date="1995" name="J. Mol. Biol.">
        <title>The structure of deoxy- and oxy-leghaemoglobin from lupin.</title>
        <authorList>
            <person name="Harutyunyan E.H."/>
            <person name="Safonova T.N."/>
            <person name="Kuranova I.P."/>
            <person name="Popov A.N."/>
            <person name="Teplyakov A.V."/>
            <person name="Obmolova G.V."/>
            <person name="Rusakov A.A."/>
            <person name="Vainshtein B.K."/>
            <person name="Dodson G.G."/>
            <person name="Wilson J.C."/>
        </authorList>
    </citation>
    <scope>X-RAY CRYSTALLOGRAPHY (1.70 ANGSTROMS) OF 2-154 IN COMPLEX WITH HEME B AND DIOXYGEN</scope>
    <scope>FUNCTION</scope>
    <scope>SUBUNIT</scope>
</reference>
<reference key="7">
    <citation type="journal article" date="1996" name="J. Mol. Biol.">
        <title>The binding of carbon monoxide and nitric oxide to leghaemoglobin in comparison with other haemoglobins.</title>
        <authorList>
            <person name="Harutyunyan E.H."/>
            <person name="Safonova T.N."/>
            <person name="Kuranova I.P."/>
            <person name="Popov A.N."/>
            <person name="Teplyakov A.V."/>
            <person name="Obmolova G.V."/>
            <person name="Valnshtein B.K."/>
            <person name="Dodson G.G."/>
            <person name="Wilson J.C."/>
        </authorList>
    </citation>
    <scope>X-RAY CRYSTALLOGRAPHY (1.80 ANGSTROMS) OF 2-154 IN COMPLEX WITH HEME B</scope>
    <scope>FUNCTION</scope>
    <scope>SUBUNIT</scope>
</reference>